<organism>
    <name type="scientific">Shigella dysenteriae serotype 1 (strain Sd197)</name>
    <dbReference type="NCBI Taxonomy" id="300267"/>
    <lineage>
        <taxon>Bacteria</taxon>
        <taxon>Pseudomonadati</taxon>
        <taxon>Pseudomonadota</taxon>
        <taxon>Gammaproteobacteria</taxon>
        <taxon>Enterobacterales</taxon>
        <taxon>Enterobacteriaceae</taxon>
        <taxon>Shigella</taxon>
    </lineage>
</organism>
<protein>
    <recommendedName>
        <fullName evidence="2">Small ribosomal subunit protein uS12</fullName>
    </recommendedName>
    <alternativeName>
        <fullName evidence="3">30S ribosomal protein S12</fullName>
    </alternativeName>
</protein>
<evidence type="ECO:0000250" key="1"/>
<evidence type="ECO:0000255" key="2">
    <source>
        <dbReference type="HAMAP-Rule" id="MF_00403"/>
    </source>
</evidence>
<evidence type="ECO:0000305" key="3"/>
<comment type="function">
    <text evidence="2">With S4 and S5 plays an important role in translational accuracy.</text>
</comment>
<comment type="function">
    <text evidence="2">Interacts with and stabilizes bases of the 16S rRNA that are involved in tRNA selection in the A site and with the mRNA backbone. Located at the interface of the 30S and 50S subunits, it traverses the body of the 30S subunit contacting proteins on the other side and probably holding the rRNA structure together. The combined cluster of proteins S8, S12 and S17 appears to hold together the shoulder and platform of the 30S subunit.</text>
</comment>
<comment type="subunit">
    <text evidence="2">Part of the 30S ribosomal subunit. Contacts proteins S8 and S17. May interact with IF1 in the 30S initiation complex.</text>
</comment>
<comment type="similarity">
    <text evidence="2">Belongs to the universal ribosomal protein uS12 family.</text>
</comment>
<keyword id="KW-0007">Acetylation</keyword>
<keyword id="KW-0488">Methylation</keyword>
<keyword id="KW-1185">Reference proteome</keyword>
<keyword id="KW-0687">Ribonucleoprotein</keyword>
<keyword id="KW-0689">Ribosomal protein</keyword>
<keyword id="KW-0694">RNA-binding</keyword>
<keyword id="KW-0699">rRNA-binding</keyword>
<keyword id="KW-0820">tRNA-binding</keyword>
<dbReference type="EMBL" id="CP000034">
    <property type="protein sequence ID" value="ABB63481.1"/>
    <property type="molecule type" value="Genomic_DNA"/>
</dbReference>
<dbReference type="RefSeq" id="WP_000246815.1">
    <property type="nucleotide sequence ID" value="NC_007606.1"/>
</dbReference>
<dbReference type="RefSeq" id="YP_404972.1">
    <property type="nucleotide sequence ID" value="NC_007606.1"/>
</dbReference>
<dbReference type="SMR" id="Q32B24"/>
<dbReference type="STRING" id="300267.SDY_3503"/>
<dbReference type="EnsemblBacteria" id="ABB63481">
    <property type="protein sequence ID" value="ABB63481"/>
    <property type="gene ID" value="SDY_3503"/>
</dbReference>
<dbReference type="GeneID" id="98390450"/>
<dbReference type="KEGG" id="sdy:SDY_3503"/>
<dbReference type="PATRIC" id="fig|300267.13.peg.4157"/>
<dbReference type="HOGENOM" id="CLU_104295_1_2_6"/>
<dbReference type="PRO" id="PR:Q32B24"/>
<dbReference type="Proteomes" id="UP000002716">
    <property type="component" value="Chromosome"/>
</dbReference>
<dbReference type="GO" id="GO:0015935">
    <property type="term" value="C:small ribosomal subunit"/>
    <property type="evidence" value="ECO:0007669"/>
    <property type="project" value="InterPro"/>
</dbReference>
<dbReference type="GO" id="GO:0019843">
    <property type="term" value="F:rRNA binding"/>
    <property type="evidence" value="ECO:0007669"/>
    <property type="project" value="UniProtKB-UniRule"/>
</dbReference>
<dbReference type="GO" id="GO:0003735">
    <property type="term" value="F:structural constituent of ribosome"/>
    <property type="evidence" value="ECO:0007669"/>
    <property type="project" value="InterPro"/>
</dbReference>
<dbReference type="GO" id="GO:0000049">
    <property type="term" value="F:tRNA binding"/>
    <property type="evidence" value="ECO:0007669"/>
    <property type="project" value="UniProtKB-UniRule"/>
</dbReference>
<dbReference type="GO" id="GO:0006412">
    <property type="term" value="P:translation"/>
    <property type="evidence" value="ECO:0007669"/>
    <property type="project" value="UniProtKB-UniRule"/>
</dbReference>
<dbReference type="CDD" id="cd03368">
    <property type="entry name" value="Ribosomal_S12"/>
    <property type="match status" value="1"/>
</dbReference>
<dbReference type="FunFam" id="2.40.50.140:FF:000001">
    <property type="entry name" value="30S ribosomal protein S12"/>
    <property type="match status" value="1"/>
</dbReference>
<dbReference type="Gene3D" id="2.40.50.140">
    <property type="entry name" value="Nucleic acid-binding proteins"/>
    <property type="match status" value="1"/>
</dbReference>
<dbReference type="HAMAP" id="MF_00403_B">
    <property type="entry name" value="Ribosomal_uS12_B"/>
    <property type="match status" value="1"/>
</dbReference>
<dbReference type="InterPro" id="IPR012340">
    <property type="entry name" value="NA-bd_OB-fold"/>
</dbReference>
<dbReference type="InterPro" id="IPR006032">
    <property type="entry name" value="Ribosomal_uS12"/>
</dbReference>
<dbReference type="InterPro" id="IPR005679">
    <property type="entry name" value="Ribosomal_uS12_bac"/>
</dbReference>
<dbReference type="NCBIfam" id="TIGR00981">
    <property type="entry name" value="rpsL_bact"/>
    <property type="match status" value="1"/>
</dbReference>
<dbReference type="PANTHER" id="PTHR11652">
    <property type="entry name" value="30S RIBOSOMAL PROTEIN S12 FAMILY MEMBER"/>
    <property type="match status" value="1"/>
</dbReference>
<dbReference type="Pfam" id="PF00164">
    <property type="entry name" value="Ribosom_S12_S23"/>
    <property type="match status" value="1"/>
</dbReference>
<dbReference type="PIRSF" id="PIRSF002133">
    <property type="entry name" value="Ribosomal_S12/S23"/>
    <property type="match status" value="1"/>
</dbReference>
<dbReference type="PRINTS" id="PR01034">
    <property type="entry name" value="RIBOSOMALS12"/>
</dbReference>
<dbReference type="SUPFAM" id="SSF50249">
    <property type="entry name" value="Nucleic acid-binding proteins"/>
    <property type="match status" value="1"/>
</dbReference>
<dbReference type="PROSITE" id="PS00055">
    <property type="entry name" value="RIBOSOMAL_S12"/>
    <property type="match status" value="1"/>
</dbReference>
<feature type="chain" id="PRO_0000226414" description="Small ribosomal subunit protein uS12">
    <location>
        <begin position="1"/>
        <end position="124"/>
    </location>
</feature>
<feature type="modified residue" description="3-methylthioaspartic acid" evidence="1">
    <location>
        <position position="89"/>
    </location>
</feature>
<feature type="modified residue" description="N6-acetyllysine" evidence="2">
    <location>
        <position position="108"/>
    </location>
</feature>
<proteinExistence type="inferred from homology"/>
<name>RS12_SHIDS</name>
<reference key="1">
    <citation type="journal article" date="2005" name="Nucleic Acids Res.">
        <title>Genome dynamics and diversity of Shigella species, the etiologic agents of bacillary dysentery.</title>
        <authorList>
            <person name="Yang F."/>
            <person name="Yang J."/>
            <person name="Zhang X."/>
            <person name="Chen L."/>
            <person name="Jiang Y."/>
            <person name="Yan Y."/>
            <person name="Tang X."/>
            <person name="Wang J."/>
            <person name="Xiong Z."/>
            <person name="Dong J."/>
            <person name="Xue Y."/>
            <person name="Zhu Y."/>
            <person name="Xu X."/>
            <person name="Sun L."/>
            <person name="Chen S."/>
            <person name="Nie H."/>
            <person name="Peng J."/>
            <person name="Xu J."/>
            <person name="Wang Y."/>
            <person name="Yuan Z."/>
            <person name="Wen Y."/>
            <person name="Yao Z."/>
            <person name="Shen Y."/>
            <person name="Qiang B."/>
            <person name="Hou Y."/>
            <person name="Yu J."/>
            <person name="Jin Q."/>
        </authorList>
    </citation>
    <scope>NUCLEOTIDE SEQUENCE [LARGE SCALE GENOMIC DNA]</scope>
    <source>
        <strain>Sd197</strain>
    </source>
</reference>
<gene>
    <name evidence="2" type="primary">rpsL</name>
    <name type="ordered locus">SDY_3503</name>
</gene>
<accession>Q32B24</accession>
<sequence length="124" mass="13737">MATVNQLVRKPRARKVAKSNVPALEACPQKRGVCTRVYTTTPKKPNSALRKVCRVRLTNGFEVTSYIGGEGHNLQEHSVILIRGGRVKDLPGVRYHTVRGALDCSGVKDRKQARSKYGVKRPKA</sequence>